<evidence type="ECO:0000255" key="1"/>
<evidence type="ECO:0000269" key="2">
    <source>
    </source>
</evidence>
<evidence type="ECO:0000303" key="3">
    <source>
    </source>
</evidence>
<evidence type="ECO:0000305" key="4"/>
<evidence type="ECO:0000305" key="5">
    <source>
    </source>
</evidence>
<proteinExistence type="evidence at protein level"/>
<comment type="subcellular location">
    <subcellularLocation>
        <location evidence="4">Secreted</location>
    </subcellularLocation>
</comment>
<comment type="tissue specificity">
    <text evidence="2">DAGWWVPPQSARALGGGR-amide: Expressed in corpora cardiaca (CC), corpora allata (CA), antennal lobe (AL) and gnathal ganglion (GNG) (at protein level). Expression in CC and CA detected in most animals, in AL in some animals and in GNG in few animals (at protein level).</text>
</comment>
<comment type="mass spectrometry">
    <text>DAGWWVPPQSARALGGGR-amide.</text>
</comment>
<comment type="similarity">
    <text evidence="4">Belongs to the insulin family.</text>
</comment>
<comment type="caution">
    <text evidence="4">Further mature peptides might exist.</text>
</comment>
<accession>C0HKS4</accession>
<organism>
    <name type="scientific">Agrotis ipsilon</name>
    <name type="common">Black cutworm moth</name>
    <dbReference type="NCBI Taxonomy" id="56364"/>
    <lineage>
        <taxon>Eukaryota</taxon>
        <taxon>Metazoa</taxon>
        <taxon>Ecdysozoa</taxon>
        <taxon>Arthropoda</taxon>
        <taxon>Hexapoda</taxon>
        <taxon>Insecta</taxon>
        <taxon>Pterygota</taxon>
        <taxon>Neoptera</taxon>
        <taxon>Endopterygota</taxon>
        <taxon>Lepidoptera</taxon>
        <taxon>Glossata</taxon>
        <taxon>Ditrysia</taxon>
        <taxon>Noctuoidea</taxon>
        <taxon>Noctuidae</taxon>
        <taxon>Noctuinae</taxon>
        <taxon>Noctuini</taxon>
        <taxon>Agrotis</taxon>
    </lineage>
</organism>
<feature type="signal peptide" evidence="1">
    <location>
        <begin position="1"/>
        <end position="19"/>
    </location>
</feature>
<feature type="propeptide" id="PRO_0000444520" evidence="5">
    <location>
        <begin position="20"/>
        <end position="43"/>
    </location>
</feature>
<feature type="peptide" id="PRO_0000444521" description="DAGWWVPPQSARALGGGR-amide" evidence="2">
    <location>
        <begin position="46"/>
        <end position="63"/>
    </location>
</feature>
<feature type="propeptide" id="PRO_0000444522" evidence="5">
    <location>
        <begin position="67"/>
        <end position="86"/>
    </location>
</feature>
<feature type="modified residue" description="Arginine amide" evidence="2">
    <location>
        <position position="63"/>
    </location>
</feature>
<reference evidence="4" key="1">
    <citation type="journal article" date="2018" name="J. Proteome Res.">
        <title>Mating-induced differential peptidomics of neuropeptides and protein hormones in Agrotis ipsilon moths.</title>
        <authorList>
            <person name="Diesner M."/>
            <person name="Gallot A."/>
            <person name="Binz H."/>
            <person name="Gaertner C."/>
            <person name="Vitecek S."/>
            <person name="Kahnt J."/>
            <person name="Schachtner J."/>
            <person name="Jacquin-Joly E."/>
            <person name="Gadenne C."/>
        </authorList>
    </citation>
    <scope>NUCLEOTIDE SEQUENCE [MRNA]</scope>
    <scope>PROTEIN SEQUENCE OF 46-63</scope>
    <scope>TISSUE SPECIFICITY</scope>
    <scope>MASS SPECTROMETRY</scope>
    <scope>IDENTIFICATION BY MASS SPECTROMETRY</scope>
    <scope>AMIDATION AT ARG-63</scope>
</reference>
<sequence>MKFYIVFALILACAACVSSQEGTNFYCGRQLSRTLALVCWGAEKRDAGWWVPPQSARALGGGRGKRGPVDECCLKPCSIEEMLTYC</sequence>
<keyword id="KW-0027">Amidation</keyword>
<keyword id="KW-0165">Cleavage on pair of basic residues</keyword>
<keyword id="KW-0903">Direct protein sequencing</keyword>
<keyword id="KW-0527">Neuropeptide</keyword>
<keyword id="KW-0873">Pyrrolidone carboxylic acid</keyword>
<keyword id="KW-0964">Secreted</keyword>
<keyword id="KW-0732">Signal</keyword>
<name>IRP2_AGRIP</name>
<protein>
    <recommendedName>
        <fullName evidence="3">Insulin-related peptide 2</fullName>
        <shortName evidence="3">IRP-2</shortName>
    </recommendedName>
    <component>
        <recommendedName>
            <fullName evidence="5">DAGWWVPPQSARALGGGR-amide</fullName>
        </recommendedName>
    </component>
</protein>
<dbReference type="GO" id="GO:0005615">
    <property type="term" value="C:extracellular space"/>
    <property type="evidence" value="ECO:0007669"/>
    <property type="project" value="InterPro"/>
</dbReference>
<dbReference type="GO" id="GO:0008083">
    <property type="term" value="F:growth factor activity"/>
    <property type="evidence" value="ECO:0007669"/>
    <property type="project" value="InterPro"/>
</dbReference>
<dbReference type="GO" id="GO:0005179">
    <property type="term" value="F:hormone activity"/>
    <property type="evidence" value="ECO:0007669"/>
    <property type="project" value="InterPro"/>
</dbReference>
<dbReference type="GO" id="GO:0007218">
    <property type="term" value="P:neuropeptide signaling pathway"/>
    <property type="evidence" value="ECO:0007669"/>
    <property type="project" value="UniProtKB-KW"/>
</dbReference>
<dbReference type="CDD" id="cd04366">
    <property type="entry name" value="IlGF_insulin_bombyxin_like"/>
    <property type="match status" value="1"/>
</dbReference>
<dbReference type="Gene3D" id="1.10.100.10">
    <property type="entry name" value="Insulin-like"/>
    <property type="match status" value="1"/>
</dbReference>
<dbReference type="InterPro" id="IPR017097">
    <property type="entry name" value="Bombyxin"/>
</dbReference>
<dbReference type="InterPro" id="IPR016179">
    <property type="entry name" value="Insulin-like"/>
</dbReference>
<dbReference type="InterPro" id="IPR036438">
    <property type="entry name" value="Insulin-like_sf"/>
</dbReference>
<dbReference type="InterPro" id="IPR022353">
    <property type="entry name" value="Insulin_CS"/>
</dbReference>
<dbReference type="InterPro" id="IPR022352">
    <property type="entry name" value="Insulin_family"/>
</dbReference>
<dbReference type="Pfam" id="PF00049">
    <property type="entry name" value="Insulin"/>
    <property type="match status" value="1"/>
</dbReference>
<dbReference type="PRINTS" id="PR02003">
    <property type="entry name" value="BOMBYXIN"/>
</dbReference>
<dbReference type="PRINTS" id="PR00276">
    <property type="entry name" value="INSULINFAMLY"/>
</dbReference>
<dbReference type="SMART" id="SM00078">
    <property type="entry name" value="IlGF"/>
    <property type="match status" value="1"/>
</dbReference>
<dbReference type="SUPFAM" id="SSF56994">
    <property type="entry name" value="Insulin-like"/>
    <property type="match status" value="1"/>
</dbReference>
<dbReference type="PROSITE" id="PS00262">
    <property type="entry name" value="INSULIN"/>
    <property type="match status" value="1"/>
</dbReference>